<protein>
    <recommendedName>
        <fullName evidence="1">Endoribonuclease YbeY</fullName>
        <ecNumber evidence="1">3.1.-.-</ecNumber>
    </recommendedName>
</protein>
<organism>
    <name type="scientific">Salmonella typhimurium (strain LT2 / SGSC1412 / ATCC 700720)</name>
    <dbReference type="NCBI Taxonomy" id="99287"/>
    <lineage>
        <taxon>Bacteria</taxon>
        <taxon>Pseudomonadati</taxon>
        <taxon>Pseudomonadota</taxon>
        <taxon>Gammaproteobacteria</taxon>
        <taxon>Enterobacterales</taxon>
        <taxon>Enterobacteriaceae</taxon>
        <taxon>Salmonella</taxon>
    </lineage>
</organism>
<name>YBEY_SALTY</name>
<sequence>MSQVILDLQLACENHAGLPDEAQFQRWLDGVIPQFQEEAEVTIRLVDEAESHDLNLTYRGKDKPTNVLSFPFEAPAGIEMPLLGDLIICRQVVEQEAQEQSKPLEAHWAHMVVHGSLHLLGYDHIDDDEAEEMESLETEIMLAMGYEDPYIAEKIAE</sequence>
<dbReference type="EC" id="3.1.-.-" evidence="1"/>
<dbReference type="EMBL" id="AE006468">
    <property type="protein sequence ID" value="AAL19619.1"/>
    <property type="molecule type" value="Genomic_DNA"/>
</dbReference>
<dbReference type="EMBL" id="AJ249116">
    <property type="protein sequence ID" value="CAB62265.1"/>
    <property type="molecule type" value="Genomic_DNA"/>
</dbReference>
<dbReference type="EMBL" id="AF085347">
    <property type="protein sequence ID" value="AAC36473.1"/>
    <property type="molecule type" value="Genomic_DNA"/>
</dbReference>
<dbReference type="RefSeq" id="NP_459660.1">
    <property type="nucleotide sequence ID" value="NC_003197.2"/>
</dbReference>
<dbReference type="RefSeq" id="WP_000084476.1">
    <property type="nucleotide sequence ID" value="NC_003197.2"/>
</dbReference>
<dbReference type="SMR" id="O87574"/>
<dbReference type="STRING" id="99287.STM0668"/>
<dbReference type="PaxDb" id="99287-STM0668"/>
<dbReference type="GeneID" id="1252188"/>
<dbReference type="KEGG" id="stm:STM0668"/>
<dbReference type="PATRIC" id="fig|99287.12.peg.704"/>
<dbReference type="HOGENOM" id="CLU_106710_0_1_6"/>
<dbReference type="OMA" id="RMRIHPL"/>
<dbReference type="PhylomeDB" id="O87574"/>
<dbReference type="BioCyc" id="SENT99287:STM0668-MONOMER"/>
<dbReference type="Proteomes" id="UP000001014">
    <property type="component" value="Chromosome"/>
</dbReference>
<dbReference type="GO" id="GO:0005737">
    <property type="term" value="C:cytoplasm"/>
    <property type="evidence" value="ECO:0007669"/>
    <property type="project" value="UniProtKB-SubCell"/>
</dbReference>
<dbReference type="GO" id="GO:0004222">
    <property type="term" value="F:metalloendopeptidase activity"/>
    <property type="evidence" value="ECO:0007669"/>
    <property type="project" value="InterPro"/>
</dbReference>
<dbReference type="GO" id="GO:0004521">
    <property type="term" value="F:RNA endonuclease activity"/>
    <property type="evidence" value="ECO:0007669"/>
    <property type="project" value="UniProtKB-UniRule"/>
</dbReference>
<dbReference type="GO" id="GO:0008270">
    <property type="term" value="F:zinc ion binding"/>
    <property type="evidence" value="ECO:0007669"/>
    <property type="project" value="UniProtKB-UniRule"/>
</dbReference>
<dbReference type="GO" id="GO:0006364">
    <property type="term" value="P:rRNA processing"/>
    <property type="evidence" value="ECO:0007669"/>
    <property type="project" value="UniProtKB-UniRule"/>
</dbReference>
<dbReference type="Gene3D" id="3.40.390.30">
    <property type="entry name" value="Metalloproteases ('zincins'), catalytic domain"/>
    <property type="match status" value="1"/>
</dbReference>
<dbReference type="HAMAP" id="MF_00009">
    <property type="entry name" value="Endoribonucl_YbeY"/>
    <property type="match status" value="1"/>
</dbReference>
<dbReference type="InterPro" id="IPR023091">
    <property type="entry name" value="MetalPrtase_cat_dom_sf_prd"/>
</dbReference>
<dbReference type="InterPro" id="IPR002036">
    <property type="entry name" value="YbeY"/>
</dbReference>
<dbReference type="InterPro" id="IPR020549">
    <property type="entry name" value="YbeY_CS"/>
</dbReference>
<dbReference type="NCBIfam" id="TIGR00043">
    <property type="entry name" value="rRNA maturation RNase YbeY"/>
    <property type="match status" value="1"/>
</dbReference>
<dbReference type="PANTHER" id="PTHR46986">
    <property type="entry name" value="ENDORIBONUCLEASE YBEY, CHLOROPLASTIC"/>
    <property type="match status" value="1"/>
</dbReference>
<dbReference type="PANTHER" id="PTHR46986:SF1">
    <property type="entry name" value="ENDORIBONUCLEASE YBEY, CHLOROPLASTIC"/>
    <property type="match status" value="1"/>
</dbReference>
<dbReference type="Pfam" id="PF02130">
    <property type="entry name" value="YbeY"/>
    <property type="match status" value="1"/>
</dbReference>
<dbReference type="SUPFAM" id="SSF55486">
    <property type="entry name" value="Metalloproteases ('zincins'), catalytic domain"/>
    <property type="match status" value="1"/>
</dbReference>
<dbReference type="PROSITE" id="PS01306">
    <property type="entry name" value="UPF0054"/>
    <property type="match status" value="1"/>
</dbReference>
<feature type="chain" id="PRO_0000102523" description="Endoribonuclease YbeY">
    <location>
        <begin position="1"/>
        <end position="157"/>
    </location>
</feature>
<feature type="binding site" evidence="1">
    <location>
        <position position="114"/>
    </location>
    <ligand>
        <name>Zn(2+)</name>
        <dbReference type="ChEBI" id="CHEBI:29105"/>
        <note>catalytic</note>
    </ligand>
</feature>
<feature type="binding site" evidence="1">
    <location>
        <position position="118"/>
    </location>
    <ligand>
        <name>Zn(2+)</name>
        <dbReference type="ChEBI" id="CHEBI:29105"/>
        <note>catalytic</note>
    </ligand>
</feature>
<feature type="binding site" evidence="1">
    <location>
        <position position="124"/>
    </location>
    <ligand>
        <name>Zn(2+)</name>
        <dbReference type="ChEBI" id="CHEBI:29105"/>
        <note>catalytic</note>
    </ligand>
</feature>
<feature type="sequence conflict" description="In Ref. 3; AAC36473." evidence="2" ref="3">
    <original>A</original>
    <variation>T</variation>
    <location>
        <position position="16"/>
    </location>
</feature>
<feature type="sequence conflict" description="In Ref. 3; AAC36473." evidence="2" ref="3">
    <original>R</original>
    <variation>T</variation>
    <location>
        <position position="26"/>
    </location>
</feature>
<feature type="sequence conflict" description="In Ref. 3; AAC36473." evidence="2" ref="3">
    <original>SH</original>
    <variation>TP</variation>
    <location>
        <begin position="51"/>
        <end position="52"/>
    </location>
</feature>
<feature type="sequence conflict" description="In Ref. 3; AAC36473." evidence="2" ref="3">
    <original>N</original>
    <variation>I</variation>
    <location>
        <position position="55"/>
    </location>
</feature>
<feature type="sequence conflict" description="In Ref. 3; AAC36473." evidence="2" ref="3">
    <original>C</original>
    <variation>S</variation>
    <location>
        <position position="89"/>
    </location>
</feature>
<feature type="sequence conflict" description="In Ref. 3; AAC36473." evidence="2" ref="3">
    <original>SK</original>
    <variation>TN</variation>
    <location>
        <begin position="101"/>
        <end position="102"/>
    </location>
</feature>
<feature type="sequence conflict" description="In Ref. 3; AAC36473." evidence="2" ref="3">
    <location>
        <begin position="155"/>
        <end position="156"/>
    </location>
</feature>
<evidence type="ECO:0000255" key="1">
    <source>
        <dbReference type="HAMAP-Rule" id="MF_00009"/>
    </source>
</evidence>
<evidence type="ECO:0000305" key="2"/>
<accession>O87574</accession>
<accession>Q9RCI0</accession>
<proteinExistence type="inferred from homology"/>
<keyword id="KW-0963">Cytoplasm</keyword>
<keyword id="KW-0255">Endonuclease</keyword>
<keyword id="KW-0378">Hydrolase</keyword>
<keyword id="KW-0479">Metal-binding</keyword>
<keyword id="KW-0540">Nuclease</keyword>
<keyword id="KW-1185">Reference proteome</keyword>
<keyword id="KW-0690">Ribosome biogenesis</keyword>
<keyword id="KW-0698">rRNA processing</keyword>
<keyword id="KW-0862">Zinc</keyword>
<reference key="1">
    <citation type="journal article" date="2001" name="Nature">
        <title>Complete genome sequence of Salmonella enterica serovar Typhimurium LT2.</title>
        <authorList>
            <person name="McClelland M."/>
            <person name="Sanderson K.E."/>
            <person name="Spieth J."/>
            <person name="Clifton S.W."/>
            <person name="Latreille P."/>
            <person name="Courtney L."/>
            <person name="Porwollik S."/>
            <person name="Ali J."/>
            <person name="Dante M."/>
            <person name="Du F."/>
            <person name="Hou S."/>
            <person name="Layman D."/>
            <person name="Leonard S."/>
            <person name="Nguyen C."/>
            <person name="Scott K."/>
            <person name="Holmes A."/>
            <person name="Grewal N."/>
            <person name="Mulvaney E."/>
            <person name="Ryan E."/>
            <person name="Sun H."/>
            <person name="Florea L."/>
            <person name="Miller W."/>
            <person name="Stoneking T."/>
            <person name="Nhan M."/>
            <person name="Waterston R."/>
            <person name="Wilson R.K."/>
        </authorList>
    </citation>
    <scope>NUCLEOTIDE SEQUENCE [LARGE SCALE GENOMIC DNA]</scope>
    <source>
        <strain>LT2 / SGSC1412 / ATCC 700720</strain>
    </source>
</reference>
<reference key="2">
    <citation type="journal article" date="1999" name="J. Bacteriol.">
        <title>Identification of the miaB gene, involved in methylthiolation of isopentenylated A37 derivatives in the tRNA of Salmonella typhimurium and Escherichia coli.</title>
        <authorList>
            <person name="Esberg B."/>
            <person name="Leung H.-C.E."/>
            <person name="Tsui H.-C.T."/>
            <person name="Bjoerk G.R."/>
            <person name="Winkler M.E."/>
        </authorList>
    </citation>
    <scope>NUCLEOTIDE SEQUENCE [GENOMIC DNA] OF 1-123</scope>
    <source>
        <strain>GT522</strain>
    </source>
</reference>
<reference key="3">
    <citation type="submission" date="1998-09" db="EMBL/GenBank/DDBJ databases">
        <title>Magnesium transport in Salmonella typhimurium: sequence and characterization of the corB, corC, and corD genes.</title>
        <authorList>
            <person name="Smith R.L."/>
            <person name="Ahuga D."/>
            <person name="Thacker L.K."/>
            <person name="Maguire M.E."/>
        </authorList>
    </citation>
    <scope>NUCLEOTIDE SEQUENCE [GENOMIC DNA] OF 16-157</scope>
    <source>
        <strain>LT2</strain>
    </source>
</reference>
<gene>
    <name evidence="1" type="primary">ybeY</name>
    <name type="ordered locus">STM0668</name>
</gene>
<comment type="function">
    <text evidence="1">Single strand-specific metallo-endoribonuclease involved in late-stage 70S ribosome quality control and in maturation of the 3' terminus of the 16S rRNA.</text>
</comment>
<comment type="cofactor">
    <cofactor evidence="1">
        <name>Zn(2+)</name>
        <dbReference type="ChEBI" id="CHEBI:29105"/>
    </cofactor>
    <text evidence="1">Binds 1 zinc ion.</text>
</comment>
<comment type="subcellular location">
    <subcellularLocation>
        <location evidence="1">Cytoplasm</location>
    </subcellularLocation>
</comment>
<comment type="similarity">
    <text evidence="1">Belongs to the endoribonuclease YbeY family.</text>
</comment>